<proteinExistence type="inferred from homology"/>
<reference key="1">
    <citation type="journal article" date="2009" name="Appl. Environ. Microbiol.">
        <title>Rhizobium sp. strain NGR234 possesses a remarkable number of secretion systems.</title>
        <authorList>
            <person name="Schmeisser C."/>
            <person name="Liesegang H."/>
            <person name="Krysciak D."/>
            <person name="Bakkou N."/>
            <person name="Le Quere A."/>
            <person name="Wollherr A."/>
            <person name="Heinemeyer I."/>
            <person name="Morgenstern B."/>
            <person name="Pommerening-Roeser A."/>
            <person name="Flores M."/>
            <person name="Palacios R."/>
            <person name="Brenner S."/>
            <person name="Gottschalk G."/>
            <person name="Schmitz R.A."/>
            <person name="Broughton W.J."/>
            <person name="Perret X."/>
            <person name="Strittmatter A.W."/>
            <person name="Streit W.R."/>
        </authorList>
    </citation>
    <scope>NUCLEOTIDE SEQUENCE [LARGE SCALE GENOMIC DNA]</scope>
    <source>
        <strain>NBRC 101917 / NGR234</strain>
    </source>
</reference>
<gene>
    <name evidence="1" type="primary">atpH</name>
    <name type="ordered locus">NGR_c31140</name>
</gene>
<dbReference type="EMBL" id="CP001389">
    <property type="protein sequence ID" value="ACP26849.1"/>
    <property type="molecule type" value="Genomic_DNA"/>
</dbReference>
<dbReference type="RefSeq" id="WP_012709601.1">
    <property type="nucleotide sequence ID" value="NC_012587.1"/>
</dbReference>
<dbReference type="RefSeq" id="YP_002827602.1">
    <property type="nucleotide sequence ID" value="NC_012587.1"/>
</dbReference>
<dbReference type="SMR" id="C3M9S4"/>
<dbReference type="STRING" id="394.NGR_c31140"/>
<dbReference type="KEGG" id="rhi:NGR_c31140"/>
<dbReference type="PATRIC" id="fig|394.7.peg.5952"/>
<dbReference type="eggNOG" id="COG0712">
    <property type="taxonomic scope" value="Bacteria"/>
</dbReference>
<dbReference type="HOGENOM" id="CLU_085114_0_1_5"/>
<dbReference type="OrthoDB" id="9796185at2"/>
<dbReference type="Proteomes" id="UP000001054">
    <property type="component" value="Chromosome"/>
</dbReference>
<dbReference type="GO" id="GO:0005886">
    <property type="term" value="C:plasma membrane"/>
    <property type="evidence" value="ECO:0007669"/>
    <property type="project" value="UniProtKB-SubCell"/>
</dbReference>
<dbReference type="GO" id="GO:0045259">
    <property type="term" value="C:proton-transporting ATP synthase complex"/>
    <property type="evidence" value="ECO:0007669"/>
    <property type="project" value="UniProtKB-KW"/>
</dbReference>
<dbReference type="GO" id="GO:0046933">
    <property type="term" value="F:proton-transporting ATP synthase activity, rotational mechanism"/>
    <property type="evidence" value="ECO:0007669"/>
    <property type="project" value="UniProtKB-UniRule"/>
</dbReference>
<dbReference type="Gene3D" id="1.10.520.20">
    <property type="entry name" value="N-terminal domain of the delta subunit of the F1F0-ATP synthase"/>
    <property type="match status" value="1"/>
</dbReference>
<dbReference type="HAMAP" id="MF_01416">
    <property type="entry name" value="ATP_synth_delta_bact"/>
    <property type="match status" value="1"/>
</dbReference>
<dbReference type="InterPro" id="IPR026015">
    <property type="entry name" value="ATP_synth_OSCP/delta_N_sf"/>
</dbReference>
<dbReference type="InterPro" id="IPR020781">
    <property type="entry name" value="ATPase_OSCP/d_CS"/>
</dbReference>
<dbReference type="InterPro" id="IPR000711">
    <property type="entry name" value="ATPase_OSCP/dsu"/>
</dbReference>
<dbReference type="NCBIfam" id="TIGR01145">
    <property type="entry name" value="ATP_synt_delta"/>
    <property type="match status" value="1"/>
</dbReference>
<dbReference type="NCBIfam" id="NF004406">
    <property type="entry name" value="PRK05758.3-2"/>
    <property type="match status" value="1"/>
</dbReference>
<dbReference type="PANTHER" id="PTHR11910">
    <property type="entry name" value="ATP SYNTHASE DELTA CHAIN"/>
    <property type="match status" value="1"/>
</dbReference>
<dbReference type="Pfam" id="PF00213">
    <property type="entry name" value="OSCP"/>
    <property type="match status" value="1"/>
</dbReference>
<dbReference type="PRINTS" id="PR00125">
    <property type="entry name" value="ATPASEDELTA"/>
</dbReference>
<dbReference type="SUPFAM" id="SSF47928">
    <property type="entry name" value="N-terminal domain of the delta subunit of the F1F0-ATP synthase"/>
    <property type="match status" value="1"/>
</dbReference>
<dbReference type="PROSITE" id="PS00389">
    <property type="entry name" value="ATPASE_DELTA"/>
    <property type="match status" value="1"/>
</dbReference>
<keyword id="KW-0066">ATP synthesis</keyword>
<keyword id="KW-0997">Cell inner membrane</keyword>
<keyword id="KW-1003">Cell membrane</keyword>
<keyword id="KW-0139">CF(1)</keyword>
<keyword id="KW-0375">Hydrogen ion transport</keyword>
<keyword id="KW-0406">Ion transport</keyword>
<keyword id="KW-0472">Membrane</keyword>
<keyword id="KW-1185">Reference proteome</keyword>
<keyword id="KW-0813">Transport</keyword>
<comment type="function">
    <text evidence="1">F(1)F(0) ATP synthase produces ATP from ADP in the presence of a proton or sodium gradient. F-type ATPases consist of two structural domains, F(1) containing the extramembraneous catalytic core and F(0) containing the membrane proton channel, linked together by a central stalk and a peripheral stalk. During catalysis, ATP synthesis in the catalytic domain of F(1) is coupled via a rotary mechanism of the central stalk subunits to proton translocation.</text>
</comment>
<comment type="function">
    <text evidence="1">This protein is part of the stalk that links CF(0) to CF(1). It either transmits conformational changes from CF(0) to CF(1) or is implicated in proton conduction.</text>
</comment>
<comment type="subunit">
    <text evidence="1">F-type ATPases have 2 components, F(1) - the catalytic core - and F(0) - the membrane proton channel. F(1) has five subunits: alpha(3), beta(3), gamma(1), delta(1), epsilon(1). F(0) has three main subunits: a(1), b(2) and c(10-14). The alpha and beta chains form an alternating ring which encloses part of the gamma chain. F(1) is attached to F(0) by a central stalk formed by the gamma and epsilon chains, while a peripheral stalk is formed by the delta and b chains.</text>
</comment>
<comment type="subcellular location">
    <subcellularLocation>
        <location evidence="1">Cell inner membrane</location>
        <topology evidence="1">Peripheral membrane protein</topology>
    </subcellularLocation>
</comment>
<comment type="similarity">
    <text evidence="1">Belongs to the ATPase delta chain family.</text>
</comment>
<accession>C3M9S4</accession>
<name>ATPD_SINFN</name>
<sequence>MPVADTSQLISGVAERYASSLFELALEAGSVEAVGADLDRVQALIDGSEDLKRLVVSPVFSADDQFKAISALVEKFGFSGLVGNFLKVVARNRRLFALPGSIKAFRLIAARHRGEITADVTSAHALTAAQETELKATLKGVTGKDVAVNVTVDPSILGGLIVKVGSRQIDTSLRTKLSTLKLALKEVG</sequence>
<evidence type="ECO:0000255" key="1">
    <source>
        <dbReference type="HAMAP-Rule" id="MF_01416"/>
    </source>
</evidence>
<protein>
    <recommendedName>
        <fullName evidence="1">ATP synthase subunit delta</fullName>
    </recommendedName>
    <alternativeName>
        <fullName evidence="1">ATP synthase F(1) sector subunit delta</fullName>
    </alternativeName>
    <alternativeName>
        <fullName evidence="1">F-type ATPase subunit delta</fullName>
        <shortName evidence="1">F-ATPase subunit delta</shortName>
    </alternativeName>
</protein>
<feature type="chain" id="PRO_1000184776" description="ATP synthase subunit delta">
    <location>
        <begin position="1"/>
        <end position="188"/>
    </location>
</feature>
<organism>
    <name type="scientific">Sinorhizobium fredii (strain NBRC 101917 / NGR234)</name>
    <dbReference type="NCBI Taxonomy" id="394"/>
    <lineage>
        <taxon>Bacteria</taxon>
        <taxon>Pseudomonadati</taxon>
        <taxon>Pseudomonadota</taxon>
        <taxon>Alphaproteobacteria</taxon>
        <taxon>Hyphomicrobiales</taxon>
        <taxon>Rhizobiaceae</taxon>
        <taxon>Sinorhizobium/Ensifer group</taxon>
        <taxon>Sinorhizobium</taxon>
    </lineage>
</organism>